<keyword id="KW-0150">Chloroplast</keyword>
<keyword id="KW-0472">Membrane</keyword>
<keyword id="KW-0602">Photosynthesis</keyword>
<keyword id="KW-0604">Photosystem II</keyword>
<keyword id="KW-0934">Plastid</keyword>
<keyword id="KW-0793">Thylakoid</keyword>
<keyword id="KW-0812">Transmembrane</keyword>
<keyword id="KW-1133">Transmembrane helix</keyword>
<protein>
    <recommendedName>
        <fullName evidence="1">Photosystem II reaction center protein T</fullName>
        <shortName evidence="1">PSII-T</shortName>
    </recommendedName>
</protein>
<feature type="chain" id="PRO_0000217907" description="Photosystem II reaction center protein T">
    <location>
        <begin position="1"/>
        <end position="35"/>
    </location>
</feature>
<feature type="transmembrane region" description="Helical" evidence="1">
    <location>
        <begin position="3"/>
        <end position="23"/>
    </location>
</feature>
<sequence length="35" mass="4004">MEALVYTFLLVSTLGIIFFAIFFREPPKVPDRGSK</sequence>
<dbReference type="EMBL" id="AF469703">
    <property type="protein sequence ID" value="AAQ18519.1"/>
    <property type="molecule type" value="Genomic_DNA"/>
</dbReference>
<dbReference type="RefSeq" id="YP_009113543.1">
    <property type="nucleotide sequence ID" value="NC_026036.1"/>
</dbReference>
<dbReference type="SMR" id="Q71LC0"/>
<dbReference type="GeneID" id="22831926"/>
<dbReference type="GO" id="GO:0009535">
    <property type="term" value="C:chloroplast thylakoid membrane"/>
    <property type="evidence" value="ECO:0007669"/>
    <property type="project" value="UniProtKB-SubCell"/>
</dbReference>
<dbReference type="GO" id="GO:0009539">
    <property type="term" value="C:photosystem II reaction center"/>
    <property type="evidence" value="ECO:0007669"/>
    <property type="project" value="InterPro"/>
</dbReference>
<dbReference type="GO" id="GO:0015979">
    <property type="term" value="P:photosynthesis"/>
    <property type="evidence" value="ECO:0007669"/>
    <property type="project" value="UniProtKB-UniRule"/>
</dbReference>
<dbReference type="HAMAP" id="MF_00808">
    <property type="entry name" value="PSII_PsbT"/>
    <property type="match status" value="1"/>
</dbReference>
<dbReference type="InterPro" id="IPR001743">
    <property type="entry name" value="PSII_PsbT"/>
</dbReference>
<dbReference type="InterPro" id="IPR037268">
    <property type="entry name" value="PSII_PsbT_sf"/>
</dbReference>
<dbReference type="PANTHER" id="PTHR36411">
    <property type="match status" value="1"/>
</dbReference>
<dbReference type="PANTHER" id="PTHR36411:SF2">
    <property type="entry name" value="PHOTOSYSTEM II REACTION CENTER PROTEIN T"/>
    <property type="match status" value="1"/>
</dbReference>
<dbReference type="Pfam" id="PF01405">
    <property type="entry name" value="PsbT"/>
    <property type="match status" value="1"/>
</dbReference>
<dbReference type="SUPFAM" id="SSF161029">
    <property type="entry name" value="Photosystem II reaction center protein T, PsbT"/>
    <property type="match status" value="1"/>
</dbReference>
<accession>Q71LC0</accession>
<geneLocation type="chloroplast"/>
<comment type="function">
    <text evidence="1">Found at the monomer-monomer interface of the photosystem II (PS II) dimer, plays a role in assembly and dimerization of PSII. PSII is a light-driven water plastoquinone oxidoreductase, using light energy to abstract electrons from H(2)O, generating a proton gradient subsequently used for ATP formation.</text>
</comment>
<comment type="subunit">
    <text evidence="1">PSII is composed of 1 copy each of membrane proteins PsbA, PsbB, PsbC, PsbD, PsbE, PsbF, PsbH, PsbI, PsbJ, PsbK, PsbL, PsbM, PsbT, PsbY, PsbZ, Psb30/Ycf12, at least 3 peripheral proteins of the oxygen-evolving complex and a large number of cofactors. It forms dimeric complexes.</text>
</comment>
<comment type="subcellular location">
    <subcellularLocation>
        <location evidence="1">Plastid</location>
        <location evidence="1">Chloroplast thylakoid membrane</location>
        <topology evidence="1">Single-pass membrane protein</topology>
    </subcellularLocation>
</comment>
<comment type="similarity">
    <text evidence="1">Belongs to the PsbT family.</text>
</comment>
<proteinExistence type="inferred from homology"/>
<evidence type="ECO:0000255" key="1">
    <source>
        <dbReference type="HAMAP-Rule" id="MF_00808"/>
    </source>
</evidence>
<organism>
    <name type="scientific">Bowenia serrulata</name>
    <name type="common">Byfield fern</name>
    <name type="synonym">Bowenia spectabilis var. serrulata</name>
    <dbReference type="NCBI Taxonomy" id="13365"/>
    <lineage>
        <taxon>Eukaryota</taxon>
        <taxon>Viridiplantae</taxon>
        <taxon>Streptophyta</taxon>
        <taxon>Embryophyta</taxon>
        <taxon>Tracheophyta</taxon>
        <taxon>Spermatophyta</taxon>
        <taxon>Cycadidae</taxon>
        <taxon>Cycadales</taxon>
        <taxon>Cycadaceae</taxon>
        <taxon>Bowenia</taxon>
    </lineage>
</organism>
<reference key="1">
    <citation type="journal article" date="2003" name="Mol. Phylogenet. Evol.">
        <title>Inference of higher-order relationships in the cycads from a large chloroplast data set.</title>
        <authorList>
            <person name="Rai H.S."/>
            <person name="O'Brien H.E."/>
            <person name="Reeves P.A."/>
            <person name="Olmstead R.G."/>
            <person name="Graham S.W."/>
        </authorList>
    </citation>
    <scope>NUCLEOTIDE SEQUENCE [GENOMIC DNA]</scope>
</reference>
<name>PSBT_BOWSE</name>
<gene>
    <name evidence="1" type="primary">psbT</name>
</gene>